<sequence>MELIKEETAPEDDSRGRQRDCRTSVVSSKQVQRNQLEICPGLVSGDVHPMCRDRSDPEPRTGDAASDDGFPADKTSSKRDSECAAVNTDGVSDGRQGKKKHRRRPSKKKRRWKPYFKLTWEEKKELDERETARASRVRAEMFAKGLPVAPYNTTQFLMEEHDREEPDLNTELGGRKSGAIRSEDTASEDENFEAEEDDEEEGGGGSDGMGRPGQAGGEFLQKDFSETYEKYHVEALQNMSKQELVREYLELEKCMSRLEEENNWLRHVRRNPESPADGTGSQRVRELEVEVEKLRAENNELLLKTPASNEPGLNQSQPS</sequence>
<protein>
    <recommendedName>
        <fullName>Protein HEXIM1</fullName>
    </recommendedName>
</protein>
<accession>A5D8S8</accession>
<dbReference type="EMBL" id="BC141797">
    <property type="protein sequence ID" value="AAI41798.1"/>
    <property type="molecule type" value="mRNA"/>
</dbReference>
<dbReference type="RefSeq" id="NP_001091859.1">
    <property type="nucleotide sequence ID" value="NM_001098389.1"/>
</dbReference>
<dbReference type="SMR" id="A5D8S8"/>
<dbReference type="FunCoup" id="A5D8S8">
    <property type="interactions" value="2022"/>
</dbReference>
<dbReference type="STRING" id="7955.ENSDARP00000053002"/>
<dbReference type="PaxDb" id="7955-ENSDARP00000053002"/>
<dbReference type="PeptideAtlas" id="A5D8S8"/>
<dbReference type="GeneID" id="562319"/>
<dbReference type="KEGG" id="dre:562319"/>
<dbReference type="AGR" id="ZFIN:ZDB-GENE-030131-4637"/>
<dbReference type="CTD" id="10614"/>
<dbReference type="ZFIN" id="ZDB-GENE-030131-4637">
    <property type="gene designation" value="hexim1"/>
</dbReference>
<dbReference type="eggNOG" id="ENOG502QQP8">
    <property type="taxonomic scope" value="Eukaryota"/>
</dbReference>
<dbReference type="InParanoid" id="A5D8S8"/>
<dbReference type="OrthoDB" id="10058500at2759"/>
<dbReference type="PhylomeDB" id="A5D8S8"/>
<dbReference type="PRO" id="PR:A5D8S8"/>
<dbReference type="Proteomes" id="UP000000437">
    <property type="component" value="Chromosome 12"/>
</dbReference>
<dbReference type="GO" id="GO:0005737">
    <property type="term" value="C:cytoplasm"/>
    <property type="evidence" value="ECO:0000318"/>
    <property type="project" value="GO_Central"/>
</dbReference>
<dbReference type="GO" id="GO:0005654">
    <property type="term" value="C:nucleoplasm"/>
    <property type="evidence" value="ECO:0000318"/>
    <property type="project" value="GO_Central"/>
</dbReference>
<dbReference type="GO" id="GO:0097322">
    <property type="term" value="F:7SK snRNA binding"/>
    <property type="evidence" value="ECO:0000318"/>
    <property type="project" value="GO_Central"/>
</dbReference>
<dbReference type="GO" id="GO:0004861">
    <property type="term" value="F:cyclin-dependent protein serine/threonine kinase inhibitor activity"/>
    <property type="evidence" value="ECO:0000318"/>
    <property type="project" value="GO_Central"/>
</dbReference>
<dbReference type="GO" id="GO:0000122">
    <property type="term" value="P:negative regulation of transcription by RNA polymerase II"/>
    <property type="evidence" value="ECO:0000318"/>
    <property type="project" value="GO_Central"/>
</dbReference>
<dbReference type="GO" id="GO:0065003">
    <property type="term" value="P:protein-containing complex assembly"/>
    <property type="evidence" value="ECO:0000353"/>
    <property type="project" value="ZFIN"/>
</dbReference>
<dbReference type="Gene3D" id="6.10.250.2910">
    <property type="match status" value="1"/>
</dbReference>
<dbReference type="InterPro" id="IPR024872">
    <property type="entry name" value="HEXIM"/>
</dbReference>
<dbReference type="PANTHER" id="PTHR13469">
    <property type="entry name" value="HEXAMETHYLENE BISACETAMIDE INDUCIBLE 1"/>
    <property type="match status" value="1"/>
</dbReference>
<dbReference type="PANTHER" id="PTHR13469:SF8">
    <property type="entry name" value="HEXIM P-TEFB COMPLEX SUBUNIT 1"/>
    <property type="match status" value="1"/>
</dbReference>
<dbReference type="Pfam" id="PF15313">
    <property type="entry name" value="HEXIM"/>
    <property type="match status" value="1"/>
</dbReference>
<dbReference type="PRINTS" id="PR02094">
    <property type="entry name" value="HEXIMFAMILY"/>
</dbReference>
<gene>
    <name type="primary">hexim1</name>
    <name type="ORF">zgc:162976</name>
</gene>
<comment type="function">
    <text evidence="1">Transcriptional regulator which functions as a general RNA polymerase II transcription inhibitor. Core component of the 7SK RNP complex: in cooperation with 7SK snRNA sequesters P-TEFb in a large inactive 7SK snRNP complex preventing RNA polymerase II phosphorylation and subsequent transcriptional elongation. Plays a role in the regulation of DNA virus-mediated innate immune response by assembling into the HDP-RNP complex, a complex that serves as a platform for IRF3 phosphorylation and subsequent innate immune response activation through the cGAS-STING pathway.</text>
</comment>
<comment type="subunit">
    <text evidence="1">Homooligomer and heterooligomer. Core component of the 7SK RNP complex.</text>
</comment>
<comment type="subcellular location">
    <subcellularLocation>
        <location evidence="1">Nucleus</location>
    </subcellularLocation>
    <subcellularLocation>
        <location evidence="1">Cytoplasm</location>
    </subcellularLocation>
    <text evidence="1">Binds alpha-importin and is mostly nuclear.</text>
</comment>
<comment type="similarity">
    <text evidence="4">Belongs to the HEXIM family.</text>
</comment>
<proteinExistence type="evidence at transcript level"/>
<keyword id="KW-0175">Coiled coil</keyword>
<keyword id="KW-0963">Cytoplasm</keyword>
<keyword id="KW-0539">Nucleus</keyword>
<keyword id="KW-1185">Reference proteome</keyword>
<keyword id="KW-0678">Repressor</keyword>
<keyword id="KW-0804">Transcription</keyword>
<keyword id="KW-0805">Transcription regulation</keyword>
<feature type="chain" id="PRO_0000305269" description="Protein HEXIM1">
    <location>
        <begin position="1"/>
        <end position="319"/>
    </location>
</feature>
<feature type="region of interest" description="Disordered" evidence="3">
    <location>
        <begin position="1"/>
        <end position="111"/>
    </location>
</feature>
<feature type="region of interest" description="Disordered" evidence="3">
    <location>
        <begin position="157"/>
        <end position="223"/>
    </location>
</feature>
<feature type="region of interest" description="Disordered" evidence="3">
    <location>
        <begin position="262"/>
        <end position="286"/>
    </location>
</feature>
<feature type="region of interest" description="Disordered" evidence="3">
    <location>
        <begin position="299"/>
        <end position="319"/>
    </location>
</feature>
<feature type="coiled-coil region" evidence="2">
    <location>
        <begin position="240"/>
        <end position="306"/>
    </location>
</feature>
<feature type="compositionally biased region" description="Basic and acidic residues" evidence="3">
    <location>
        <begin position="1"/>
        <end position="22"/>
    </location>
</feature>
<feature type="compositionally biased region" description="Polar residues" evidence="3">
    <location>
        <begin position="24"/>
        <end position="35"/>
    </location>
</feature>
<feature type="compositionally biased region" description="Basic and acidic residues" evidence="3">
    <location>
        <begin position="49"/>
        <end position="61"/>
    </location>
</feature>
<feature type="compositionally biased region" description="Basic residues" evidence="3">
    <location>
        <begin position="97"/>
        <end position="111"/>
    </location>
</feature>
<feature type="compositionally biased region" description="Acidic residues" evidence="3">
    <location>
        <begin position="185"/>
        <end position="202"/>
    </location>
</feature>
<feature type="compositionally biased region" description="Gly residues" evidence="3">
    <location>
        <begin position="203"/>
        <end position="216"/>
    </location>
</feature>
<feature type="compositionally biased region" description="Polar residues" evidence="3">
    <location>
        <begin position="306"/>
        <end position="319"/>
    </location>
</feature>
<evidence type="ECO:0000250" key="1">
    <source>
        <dbReference type="UniProtKB" id="O94992"/>
    </source>
</evidence>
<evidence type="ECO:0000255" key="2"/>
<evidence type="ECO:0000256" key="3">
    <source>
        <dbReference type="SAM" id="MobiDB-lite"/>
    </source>
</evidence>
<evidence type="ECO:0000305" key="4"/>
<name>HEXI1_DANRE</name>
<organism>
    <name type="scientific">Danio rerio</name>
    <name type="common">Zebrafish</name>
    <name type="synonym">Brachydanio rerio</name>
    <dbReference type="NCBI Taxonomy" id="7955"/>
    <lineage>
        <taxon>Eukaryota</taxon>
        <taxon>Metazoa</taxon>
        <taxon>Chordata</taxon>
        <taxon>Craniata</taxon>
        <taxon>Vertebrata</taxon>
        <taxon>Euteleostomi</taxon>
        <taxon>Actinopterygii</taxon>
        <taxon>Neopterygii</taxon>
        <taxon>Teleostei</taxon>
        <taxon>Ostariophysi</taxon>
        <taxon>Cypriniformes</taxon>
        <taxon>Danionidae</taxon>
        <taxon>Danioninae</taxon>
        <taxon>Danio</taxon>
    </lineage>
</organism>
<reference key="1">
    <citation type="submission" date="2007-05" db="EMBL/GenBank/DDBJ databases">
        <authorList>
            <consortium name="NIH - Zebrafish Gene Collection (ZGC) project"/>
        </authorList>
    </citation>
    <scope>NUCLEOTIDE SEQUENCE [LARGE SCALE MRNA]</scope>
    <source>
        <tissue>Ovary</tissue>
    </source>
</reference>